<comment type="function">
    <text evidence="1 2">Prenyltransferase that catalyzes the transfer of the geranylgeranyl moiety of geranylgeranyl diphosphate (GGPP) to the C3 hydroxyl of sn-glycerol-1-phosphate (G1P).</text>
</comment>
<comment type="catalytic activity">
    <reaction evidence="1 2">
        <text>sn-glycerol 1-phosphate + (2E,6E,10E)-geranylgeranyl diphosphate = sn-3-O-(geranylgeranyl)glycerol 1-phosphate + diphosphate</text>
        <dbReference type="Rhea" id="RHEA:23404"/>
        <dbReference type="ChEBI" id="CHEBI:33019"/>
        <dbReference type="ChEBI" id="CHEBI:57677"/>
        <dbReference type="ChEBI" id="CHEBI:57685"/>
        <dbReference type="ChEBI" id="CHEBI:58756"/>
        <dbReference type="EC" id="2.5.1.41"/>
    </reaction>
</comment>
<comment type="cofactor">
    <cofactor evidence="1">
        <name>Mg(2+)</name>
        <dbReference type="ChEBI" id="CHEBI:18420"/>
    </cofactor>
</comment>
<comment type="subunit">
    <text evidence="2">Homohexamer.</text>
</comment>
<comment type="similarity">
    <text evidence="1">Belongs to the GGGP/HepGP synthase family. Group II subfamily.</text>
</comment>
<name>GGGPS_CHIPD</name>
<feature type="chain" id="PRO_0000436907" description="Geranylgeranylglyceryl phosphate synthase">
    <location>
        <begin position="1"/>
        <end position="252"/>
    </location>
</feature>
<feature type="binding site" evidence="1">
    <location>
        <position position="25"/>
    </location>
    <ligand>
        <name>Mg(2+)</name>
        <dbReference type="ChEBI" id="CHEBI:18420"/>
    </ligand>
</feature>
<feature type="binding site" evidence="1">
    <location>
        <position position="54"/>
    </location>
    <ligand>
        <name>Mg(2+)</name>
        <dbReference type="ChEBI" id="CHEBI:18420"/>
    </ligand>
</feature>
<feature type="binding site" evidence="1">
    <location>
        <begin position="174"/>
        <end position="180"/>
    </location>
    <ligand>
        <name>sn-glycerol 1-phosphate</name>
        <dbReference type="ChEBI" id="CHEBI:57685"/>
    </ligand>
</feature>
<feature type="binding site" evidence="1">
    <location>
        <begin position="205"/>
        <end position="206"/>
    </location>
    <ligand>
        <name>sn-glycerol 1-phosphate</name>
        <dbReference type="ChEBI" id="CHEBI:57685"/>
    </ligand>
</feature>
<feature type="binding site" evidence="1">
    <location>
        <begin position="227"/>
        <end position="228"/>
    </location>
    <ligand>
        <name>sn-glycerol 1-phosphate</name>
        <dbReference type="ChEBI" id="CHEBI:57685"/>
    </ligand>
</feature>
<feature type="mutagenesis site" description="Forms homodimers. Strong decrease in activity." evidence="2">
    <original>Y</original>
    <variation>A</variation>
    <location>
        <position position="143"/>
    </location>
</feature>
<proteinExistence type="evidence at protein level"/>
<dbReference type="EC" id="2.5.1.41" evidence="1 2"/>
<dbReference type="EMBL" id="CP001699">
    <property type="protein sequence ID" value="ACU57872.1"/>
    <property type="molecule type" value="Genomic_DNA"/>
</dbReference>
<dbReference type="RefSeq" id="WP_012788048.1">
    <property type="nucleotide sequence ID" value="NC_013132.1"/>
</dbReference>
<dbReference type="SMR" id="C7PEQ0"/>
<dbReference type="STRING" id="485918.Cpin_0373"/>
<dbReference type="KEGG" id="cpi:Cpin_0373"/>
<dbReference type="eggNOG" id="COG1646">
    <property type="taxonomic scope" value="Bacteria"/>
</dbReference>
<dbReference type="HOGENOM" id="CLU_068610_0_0_10"/>
<dbReference type="OrthoDB" id="9807235at2"/>
<dbReference type="Proteomes" id="UP000002215">
    <property type="component" value="Chromosome"/>
</dbReference>
<dbReference type="GO" id="GO:0005737">
    <property type="term" value="C:cytoplasm"/>
    <property type="evidence" value="ECO:0007669"/>
    <property type="project" value="InterPro"/>
</dbReference>
<dbReference type="GO" id="GO:0000107">
    <property type="term" value="F:imidazoleglycerol-phosphate synthase activity"/>
    <property type="evidence" value="ECO:0007669"/>
    <property type="project" value="TreeGrafter"/>
</dbReference>
<dbReference type="GO" id="GO:0000287">
    <property type="term" value="F:magnesium ion binding"/>
    <property type="evidence" value="ECO:0007669"/>
    <property type="project" value="UniProtKB-UniRule"/>
</dbReference>
<dbReference type="GO" id="GO:0047294">
    <property type="term" value="F:phosphoglycerol geranylgeranyltransferase activity"/>
    <property type="evidence" value="ECO:0007669"/>
    <property type="project" value="UniProtKB-UniRule"/>
</dbReference>
<dbReference type="GO" id="GO:0046474">
    <property type="term" value="P:glycerophospholipid biosynthetic process"/>
    <property type="evidence" value="ECO:0007669"/>
    <property type="project" value="UniProtKB-UniRule"/>
</dbReference>
<dbReference type="CDD" id="cd02812">
    <property type="entry name" value="PcrB_like"/>
    <property type="match status" value="1"/>
</dbReference>
<dbReference type="Gene3D" id="3.20.20.390">
    <property type="entry name" value="FMN-linked oxidoreductases"/>
    <property type="match status" value="1"/>
</dbReference>
<dbReference type="HAMAP" id="MF_00112">
    <property type="entry name" value="GGGP_HepGP_synthase"/>
    <property type="match status" value="1"/>
</dbReference>
<dbReference type="InterPro" id="IPR038597">
    <property type="entry name" value="GGGP/HepGP_synthase_sf"/>
</dbReference>
<dbReference type="InterPro" id="IPR008205">
    <property type="entry name" value="GGGP_HepGP_synthase"/>
</dbReference>
<dbReference type="InterPro" id="IPR010946">
    <property type="entry name" value="GGGP_synth"/>
</dbReference>
<dbReference type="InterPro" id="IPR050064">
    <property type="entry name" value="IGPS_HisA/HisF"/>
</dbReference>
<dbReference type="NCBIfam" id="TIGR01769">
    <property type="entry name" value="GGGP"/>
    <property type="match status" value="1"/>
</dbReference>
<dbReference type="NCBIfam" id="TIGR01768">
    <property type="entry name" value="GGGP-family"/>
    <property type="match status" value="1"/>
</dbReference>
<dbReference type="NCBIfam" id="NF003198">
    <property type="entry name" value="PRK04169.1-2"/>
    <property type="match status" value="1"/>
</dbReference>
<dbReference type="PANTHER" id="PTHR21235:SF22">
    <property type="entry name" value="GERANYLGERANYLGLYCERYL PHOSPHATE SYNTHASE"/>
    <property type="match status" value="1"/>
</dbReference>
<dbReference type="PANTHER" id="PTHR21235">
    <property type="entry name" value="IMIDAZOLE GLYCEROL PHOSPHATE SYNTHASE SUBUNIT HISF/H IGP SYNTHASE SUBUNIT HISF/H"/>
    <property type="match status" value="1"/>
</dbReference>
<dbReference type="Pfam" id="PF01884">
    <property type="entry name" value="PcrB"/>
    <property type="match status" value="1"/>
</dbReference>
<dbReference type="SUPFAM" id="SSF51395">
    <property type="entry name" value="FMN-linked oxidoreductases"/>
    <property type="match status" value="1"/>
</dbReference>
<evidence type="ECO:0000255" key="1">
    <source>
        <dbReference type="HAMAP-Rule" id="MF_00112"/>
    </source>
</evidence>
<evidence type="ECO:0000269" key="2">
    <source>
    </source>
</evidence>
<evidence type="ECO:0000312" key="3">
    <source>
        <dbReference type="EMBL" id="ACU57872.1"/>
    </source>
</evidence>
<keyword id="KW-0444">Lipid biosynthesis</keyword>
<keyword id="KW-0443">Lipid metabolism</keyword>
<keyword id="KW-0460">Magnesium</keyword>
<keyword id="KW-0479">Metal-binding</keyword>
<keyword id="KW-0594">Phospholipid biosynthesis</keyword>
<keyword id="KW-1208">Phospholipid metabolism</keyword>
<keyword id="KW-0808">Transferase</keyword>
<sequence>MHNKIYNSFIDRKAKGIKSFAVLIDPDKVNPADIADLAAKCTAAKVDYIFLGGSLVITNHLDECVQQFKTLCDIPVVLFPGSPSQVSRYADALLYLSVISGRNPELLIGQHVLSAPAVKKSGLEVISTGYVLIDGGAPTTVSYISNTTPIPSDKDDIAMCTAMAGEMLGMKVVFMDAGSGARKPITESMISRVASQVSAPIIVGGGIRDAEKAYLNCKAGADIIVVGNAIEKETSLIKEMADAVHAAAPVLK</sequence>
<protein>
    <recommendedName>
        <fullName evidence="1">Geranylgeranylglyceryl phosphate synthase</fullName>
        <shortName evidence="1">GGGP synthase</shortName>
        <shortName evidence="1">GGGPS</shortName>
        <ecNumber evidence="1 2">2.5.1.41</ecNumber>
    </recommendedName>
    <alternativeName>
        <fullName evidence="1">(S)-3-O-geranylgeranylglyceryl phosphate synthase</fullName>
    </alternativeName>
    <alternativeName>
        <fullName evidence="1">Phosphoglycerol geranylgeranyltransferase</fullName>
    </alternativeName>
</protein>
<reference key="1">
    <citation type="submission" date="2009-08" db="EMBL/GenBank/DDBJ databases">
        <title>The complete genome of Chitinophaga pinensis DSM 2588.</title>
        <authorList>
            <consortium name="US DOE Joint Genome Institute (JGI-PGF)"/>
            <person name="Lucas S."/>
            <person name="Copeland A."/>
            <person name="Lapidus A."/>
            <person name="Glavina del Rio T."/>
            <person name="Dalin E."/>
            <person name="Tice H."/>
            <person name="Bruce D."/>
            <person name="Goodwin L."/>
            <person name="Pitluck S."/>
            <person name="Kyrpides N."/>
            <person name="Mavromatis K."/>
            <person name="Ivanova N."/>
            <person name="Mikhailova N."/>
            <person name="Sims D."/>
            <person name="Meinche L."/>
            <person name="Brettin T."/>
            <person name="Detter J.C."/>
            <person name="Han C."/>
            <person name="Larimer F."/>
            <person name="Land M."/>
            <person name="Hauser L."/>
            <person name="Markowitz V."/>
            <person name="Cheng J.-F."/>
            <person name="Hugenholtz P."/>
            <person name="Woyke T."/>
            <person name="Wu D."/>
            <person name="Spring S."/>
            <person name="Klenk H.-P."/>
            <person name="Eisen J.A."/>
        </authorList>
    </citation>
    <scope>NUCLEOTIDE SEQUENCE [LARGE SCALE GENOMIC DNA]</scope>
    <source>
        <strain>ATCC 43595 / DSM 2588 / LMG 13176 / NBRC 15968 / NCIMB 11800 / UQM 2034</strain>
    </source>
</reference>
<reference key="2">
    <citation type="journal article" date="2014" name="Mol. Microbiol.">
        <title>A comprehensive analysis of the geranylgeranylglyceryl phosphate synthase enzyme family identifies novel members and reveals mechanisms of substrate specificity and quaternary structure organization.</title>
        <authorList>
            <person name="Peterhoff D."/>
            <person name="Beer B."/>
            <person name="Rajendran C."/>
            <person name="Kumpula E.P."/>
            <person name="Kapetaniou E."/>
            <person name="Guldan H."/>
            <person name="Wierenga R.K."/>
            <person name="Sterner R."/>
            <person name="Babinger P."/>
        </authorList>
    </citation>
    <scope>FUNCTION</scope>
    <scope>CATALYTIC ACTIVITY</scope>
    <scope>SUBUNIT</scope>
    <scope>MUTAGENESIS OF TYR-143</scope>
</reference>
<accession>C7PEQ0</accession>
<gene>
    <name evidence="3" type="ordered locus">Cpin_0373</name>
</gene>
<organism>
    <name type="scientific">Chitinophaga pinensis (strain ATCC 43595 / DSM 2588 / LMG 13176 / NBRC 15968 / NCIMB 11800 / UQM 2034)</name>
    <dbReference type="NCBI Taxonomy" id="485918"/>
    <lineage>
        <taxon>Bacteria</taxon>
        <taxon>Pseudomonadati</taxon>
        <taxon>Bacteroidota</taxon>
        <taxon>Chitinophagia</taxon>
        <taxon>Chitinophagales</taxon>
        <taxon>Chitinophagaceae</taxon>
        <taxon>Chitinophaga</taxon>
    </lineage>
</organism>